<organism>
    <name type="scientific">Oryza sativa subsp. indica</name>
    <name type="common">Rice</name>
    <dbReference type="NCBI Taxonomy" id="39946"/>
    <lineage>
        <taxon>Eukaryota</taxon>
        <taxon>Viridiplantae</taxon>
        <taxon>Streptophyta</taxon>
        <taxon>Embryophyta</taxon>
        <taxon>Tracheophyta</taxon>
        <taxon>Spermatophyta</taxon>
        <taxon>Magnoliopsida</taxon>
        <taxon>Liliopsida</taxon>
        <taxon>Poales</taxon>
        <taxon>Poaceae</taxon>
        <taxon>BOP clade</taxon>
        <taxon>Oryzoideae</taxon>
        <taxon>Oryzeae</taxon>
        <taxon>Oryzinae</taxon>
        <taxon>Oryza</taxon>
        <taxon>Oryza sativa</taxon>
    </lineage>
</organism>
<proteinExistence type="evidence at transcript level"/>
<feature type="chain" id="PRO_0000296246" description="Heat shock protein 81-1">
    <location>
        <begin position="1"/>
        <end position="699"/>
    </location>
</feature>
<feature type="region of interest" description="Disordered" evidence="2">
    <location>
        <begin position="215"/>
        <end position="250"/>
    </location>
</feature>
<feature type="region of interest" description="Disordered" evidence="2">
    <location>
        <begin position="672"/>
        <end position="699"/>
    </location>
</feature>
<feature type="short sequence motif" description="TPR repeat-binding">
    <location>
        <begin position="695"/>
        <end position="699"/>
    </location>
</feature>
<feature type="compositionally biased region" description="Basic and acidic residues" evidence="2">
    <location>
        <begin position="228"/>
        <end position="237"/>
    </location>
</feature>
<feature type="compositionally biased region" description="Acidic residues" evidence="2">
    <location>
        <begin position="672"/>
        <end position="690"/>
    </location>
</feature>
<feature type="binding site" evidence="1">
    <location>
        <position position="39"/>
    </location>
    <ligand>
        <name>ATP</name>
        <dbReference type="ChEBI" id="CHEBI:30616"/>
    </ligand>
</feature>
<feature type="binding site" evidence="1">
    <location>
        <position position="81"/>
    </location>
    <ligand>
        <name>ATP</name>
        <dbReference type="ChEBI" id="CHEBI:30616"/>
    </ligand>
</feature>
<feature type="binding site" evidence="1">
    <location>
        <position position="126"/>
    </location>
    <ligand>
        <name>ATP</name>
        <dbReference type="ChEBI" id="CHEBI:30616"/>
    </ligand>
</feature>
<feature type="binding site" evidence="1">
    <location>
        <position position="373"/>
    </location>
    <ligand>
        <name>ATP</name>
        <dbReference type="ChEBI" id="CHEBI:30616"/>
    </ligand>
</feature>
<comment type="function">
    <text evidence="1">Molecular chaperone that promotes the maturation, structural maintenance and proper regulation of specific target proteins involved for instance in cell cycle control and signal transduction. Undergoes a functional cycle that is linked to its ATPase activity. This cycle probably induces conformational changes in the client proteins, thereby causing their activation. Interacts dynamically with various co-chaperones that modulate its substrate recognition, ATPase cycle and chaperone function (By similarity).</text>
</comment>
<comment type="subunit">
    <text evidence="1">Homodimer.</text>
</comment>
<comment type="subcellular location">
    <subcellularLocation>
        <location evidence="3">Cytoplasm</location>
    </subcellularLocation>
</comment>
<comment type="domain">
    <text evidence="1">The TPR repeat-binding motif mediates interaction with TPR repeat-containing proteins.</text>
</comment>
<comment type="similarity">
    <text evidence="3">Belongs to the heat shock protein 90 family.</text>
</comment>
<reference key="1">
    <citation type="journal article" date="1994" name="Planta">
        <title>Heat-inducible rice hsp82 and hsp70 are not always co-regulated.</title>
        <authorList>
            <person name="van Breusegem F."/>
            <person name="de Keyser R."/>
            <person name="Garcia A."/>
            <person name="Claes B."/>
            <person name="Gielen J."/>
            <person name="van Montagu M."/>
            <person name="Caplan A."/>
        </authorList>
    </citation>
    <scope>NUCLEOTIDE SEQUENCE [GENOMIC DNA]</scope>
    <source>
        <strain>cv. Taichung native 1</strain>
    </source>
</reference>
<reference key="2">
    <citation type="journal article" date="2005" name="PLoS Biol.">
        <title>The genomes of Oryza sativa: a history of duplications.</title>
        <authorList>
            <person name="Yu J."/>
            <person name="Wang J."/>
            <person name="Lin W."/>
            <person name="Li S."/>
            <person name="Li H."/>
            <person name="Zhou J."/>
            <person name="Ni P."/>
            <person name="Dong W."/>
            <person name="Hu S."/>
            <person name="Zeng C."/>
            <person name="Zhang J."/>
            <person name="Zhang Y."/>
            <person name="Li R."/>
            <person name="Xu Z."/>
            <person name="Li S."/>
            <person name="Li X."/>
            <person name="Zheng H."/>
            <person name="Cong L."/>
            <person name="Lin L."/>
            <person name="Yin J."/>
            <person name="Geng J."/>
            <person name="Li G."/>
            <person name="Shi J."/>
            <person name="Liu J."/>
            <person name="Lv H."/>
            <person name="Li J."/>
            <person name="Wang J."/>
            <person name="Deng Y."/>
            <person name="Ran L."/>
            <person name="Shi X."/>
            <person name="Wang X."/>
            <person name="Wu Q."/>
            <person name="Li C."/>
            <person name="Ren X."/>
            <person name="Wang J."/>
            <person name="Wang X."/>
            <person name="Li D."/>
            <person name="Liu D."/>
            <person name="Zhang X."/>
            <person name="Ji Z."/>
            <person name="Zhao W."/>
            <person name="Sun Y."/>
            <person name="Zhang Z."/>
            <person name="Bao J."/>
            <person name="Han Y."/>
            <person name="Dong L."/>
            <person name="Ji J."/>
            <person name="Chen P."/>
            <person name="Wu S."/>
            <person name="Liu J."/>
            <person name="Xiao Y."/>
            <person name="Bu D."/>
            <person name="Tan J."/>
            <person name="Yang L."/>
            <person name="Ye C."/>
            <person name="Zhang J."/>
            <person name="Xu J."/>
            <person name="Zhou Y."/>
            <person name="Yu Y."/>
            <person name="Zhang B."/>
            <person name="Zhuang S."/>
            <person name="Wei H."/>
            <person name="Liu B."/>
            <person name="Lei M."/>
            <person name="Yu H."/>
            <person name="Li Y."/>
            <person name="Xu H."/>
            <person name="Wei S."/>
            <person name="He X."/>
            <person name="Fang L."/>
            <person name="Zhang Z."/>
            <person name="Zhang Y."/>
            <person name="Huang X."/>
            <person name="Su Z."/>
            <person name="Tong W."/>
            <person name="Li J."/>
            <person name="Tong Z."/>
            <person name="Li S."/>
            <person name="Ye J."/>
            <person name="Wang L."/>
            <person name="Fang L."/>
            <person name="Lei T."/>
            <person name="Chen C.-S."/>
            <person name="Chen H.-C."/>
            <person name="Xu Z."/>
            <person name="Li H."/>
            <person name="Huang H."/>
            <person name="Zhang F."/>
            <person name="Xu H."/>
            <person name="Li N."/>
            <person name="Zhao C."/>
            <person name="Li S."/>
            <person name="Dong L."/>
            <person name="Huang Y."/>
            <person name="Li L."/>
            <person name="Xi Y."/>
            <person name="Qi Q."/>
            <person name="Li W."/>
            <person name="Zhang B."/>
            <person name="Hu W."/>
            <person name="Zhang Y."/>
            <person name="Tian X."/>
            <person name="Jiao Y."/>
            <person name="Liang X."/>
            <person name="Jin J."/>
            <person name="Gao L."/>
            <person name="Zheng W."/>
            <person name="Hao B."/>
            <person name="Liu S.-M."/>
            <person name="Wang W."/>
            <person name="Yuan L."/>
            <person name="Cao M."/>
            <person name="McDermott J."/>
            <person name="Samudrala R."/>
            <person name="Wang J."/>
            <person name="Wong G.K.-S."/>
            <person name="Yang H."/>
        </authorList>
    </citation>
    <scope>NUCLEOTIDE SEQUENCE [LARGE SCALE GENOMIC DNA]</scope>
    <source>
        <strain>cv. 93-11</strain>
    </source>
</reference>
<dbReference type="EMBL" id="Z11920">
    <property type="protein sequence ID" value="CAA77978.1"/>
    <property type="molecule type" value="Genomic_DNA"/>
</dbReference>
<dbReference type="EMBL" id="CM000133">
    <property type="protein sequence ID" value="EAZ07512.1"/>
    <property type="molecule type" value="Genomic_DNA"/>
</dbReference>
<dbReference type="PIR" id="S25541">
    <property type="entry name" value="S25541"/>
</dbReference>
<dbReference type="SMR" id="A2YWQ1"/>
<dbReference type="STRING" id="39946.A2YWQ1"/>
<dbReference type="iPTMnet" id="A2YWQ1"/>
<dbReference type="EnsemblPlants" id="BGIOSGA026730-TA">
    <property type="protein sequence ID" value="BGIOSGA026730-PA"/>
    <property type="gene ID" value="BGIOSGA026730"/>
</dbReference>
<dbReference type="Gramene" id="BGIOSGA026730-TA">
    <property type="protein sequence ID" value="BGIOSGA026730-PA"/>
    <property type="gene ID" value="BGIOSGA026730"/>
</dbReference>
<dbReference type="HOGENOM" id="CLU_006684_1_3_1"/>
<dbReference type="OMA" id="MRRMKEM"/>
<dbReference type="Proteomes" id="UP000007015">
    <property type="component" value="Chromosome 8"/>
</dbReference>
<dbReference type="GO" id="GO:0005737">
    <property type="term" value="C:cytoplasm"/>
    <property type="evidence" value="ECO:0007669"/>
    <property type="project" value="UniProtKB-SubCell"/>
</dbReference>
<dbReference type="GO" id="GO:0005524">
    <property type="term" value="F:ATP binding"/>
    <property type="evidence" value="ECO:0007669"/>
    <property type="project" value="UniProtKB-KW"/>
</dbReference>
<dbReference type="GO" id="GO:0016887">
    <property type="term" value="F:ATP hydrolysis activity"/>
    <property type="evidence" value="ECO:0007669"/>
    <property type="project" value="InterPro"/>
</dbReference>
<dbReference type="GO" id="GO:0140662">
    <property type="term" value="F:ATP-dependent protein folding chaperone"/>
    <property type="evidence" value="ECO:0007669"/>
    <property type="project" value="InterPro"/>
</dbReference>
<dbReference type="GO" id="GO:0051082">
    <property type="term" value="F:unfolded protein binding"/>
    <property type="evidence" value="ECO:0007669"/>
    <property type="project" value="InterPro"/>
</dbReference>
<dbReference type="CDD" id="cd16927">
    <property type="entry name" value="HATPase_Hsp90-like"/>
    <property type="match status" value="1"/>
</dbReference>
<dbReference type="FunFam" id="3.30.565.10:FF:000012">
    <property type="entry name" value="Heat shock cognate protein"/>
    <property type="match status" value="1"/>
</dbReference>
<dbReference type="FunFam" id="1.20.120.790:FF:000001">
    <property type="entry name" value="Heat shock protein 90 alpha"/>
    <property type="match status" value="1"/>
</dbReference>
<dbReference type="FunFam" id="3.30.230.80:FF:000001">
    <property type="entry name" value="Heat shock protein 90 alpha"/>
    <property type="match status" value="1"/>
</dbReference>
<dbReference type="FunFam" id="3.40.50.11260:FF:000001">
    <property type="entry name" value="Heat shock protein 90 alpha"/>
    <property type="match status" value="1"/>
</dbReference>
<dbReference type="Gene3D" id="3.30.230.80">
    <property type="match status" value="1"/>
</dbReference>
<dbReference type="Gene3D" id="3.40.50.11260">
    <property type="match status" value="1"/>
</dbReference>
<dbReference type="Gene3D" id="1.20.120.790">
    <property type="entry name" value="Heat shock protein 90, C-terminal domain"/>
    <property type="match status" value="1"/>
</dbReference>
<dbReference type="Gene3D" id="3.30.565.10">
    <property type="entry name" value="Histidine kinase-like ATPase, C-terminal domain"/>
    <property type="match status" value="1"/>
</dbReference>
<dbReference type="HAMAP" id="MF_00505">
    <property type="entry name" value="HSP90"/>
    <property type="match status" value="1"/>
</dbReference>
<dbReference type="InterPro" id="IPR036890">
    <property type="entry name" value="HATPase_C_sf"/>
</dbReference>
<dbReference type="InterPro" id="IPR019805">
    <property type="entry name" value="Heat_shock_protein_90_CS"/>
</dbReference>
<dbReference type="InterPro" id="IPR037196">
    <property type="entry name" value="HSP90_C"/>
</dbReference>
<dbReference type="InterPro" id="IPR001404">
    <property type="entry name" value="Hsp90_fam"/>
</dbReference>
<dbReference type="InterPro" id="IPR020575">
    <property type="entry name" value="Hsp90_N"/>
</dbReference>
<dbReference type="InterPro" id="IPR020568">
    <property type="entry name" value="Ribosomal_Su5_D2-typ_SF"/>
</dbReference>
<dbReference type="NCBIfam" id="NF003555">
    <property type="entry name" value="PRK05218.1"/>
    <property type="match status" value="1"/>
</dbReference>
<dbReference type="PANTHER" id="PTHR11528">
    <property type="entry name" value="HEAT SHOCK PROTEIN 90 FAMILY MEMBER"/>
    <property type="match status" value="1"/>
</dbReference>
<dbReference type="Pfam" id="PF13589">
    <property type="entry name" value="HATPase_c_3"/>
    <property type="match status" value="1"/>
</dbReference>
<dbReference type="Pfam" id="PF00183">
    <property type="entry name" value="HSP90"/>
    <property type="match status" value="1"/>
</dbReference>
<dbReference type="PIRSF" id="PIRSF002583">
    <property type="entry name" value="Hsp90"/>
    <property type="match status" value="1"/>
</dbReference>
<dbReference type="PRINTS" id="PR00775">
    <property type="entry name" value="HEATSHOCK90"/>
</dbReference>
<dbReference type="SMART" id="SM00387">
    <property type="entry name" value="HATPase_c"/>
    <property type="match status" value="1"/>
</dbReference>
<dbReference type="SUPFAM" id="SSF55874">
    <property type="entry name" value="ATPase domain of HSP90 chaperone/DNA topoisomerase II/histidine kinase"/>
    <property type="match status" value="1"/>
</dbReference>
<dbReference type="SUPFAM" id="SSF110942">
    <property type="entry name" value="HSP90 C-terminal domain"/>
    <property type="match status" value="1"/>
</dbReference>
<dbReference type="SUPFAM" id="SSF54211">
    <property type="entry name" value="Ribosomal protein S5 domain 2-like"/>
    <property type="match status" value="1"/>
</dbReference>
<dbReference type="PROSITE" id="PS00298">
    <property type="entry name" value="HSP90"/>
    <property type="match status" value="1"/>
</dbReference>
<protein>
    <recommendedName>
        <fullName>Heat shock protein 81-1</fullName>
        <shortName>HSP81-1</shortName>
    </recommendedName>
    <alternativeName>
        <fullName>Heat shock protein 82</fullName>
    </alternativeName>
</protein>
<name>HSP81_ORYSI</name>
<sequence length="699" mass="80194">MASETETFAFQAEINQLLSLIINTFYSNKEIFLRELISNSSDALDKIRFESLTDKSKLDAQPELFIHIVPDKASNTLSIIDSGIGMTKSDLVNNLGTIARSGTKEFMEALAAGADVSMIGQFGVGFYSAYLVAERVVVTTKHNDDEQYVWESQAGGSFTVTRDTSGEQLGRGTKITLYLKDDQLEYLEERRLKDLIKKHSEFISYPISLWTEKTTEKEISDDEDEEEKKDAEEGKVEDVDEEKEEKEKKKKKIKEVSHEWSLVNKQKPIWMRKPEEITKEEYAAFYKSLTNDWEEHLAVKHFSVEGQLEFKAVLFVPKRAPFDLFDTRKKLNNIKLYVRRVFIMDNCEELIPEWLSFVKGIVDSEDLPLNISREMLQQNKILKVIRKNLVKKCVELFFEIAENKEDYNKFYEAFSKNLKLGIHEDSTNRNKIAELLRYHSTKSGDELTSLKDYVTRMKEGQNDIYYITGESKKAVENSPFLEKLKKKGYEVLYMVDAIDEYAVGQLKEFEGKKLVSATKEGLKLDESEDEKKRKEELKEKFEGLCKVIKEVLGDKVEKVVVSDRVVDSPCCLVTGEYGWTANMERIMKAQALRDSSMAGYMSSKKTMEINPENAIMEELRKRADADKNDKSVKDLVLLLFETALLTSGFSLDDPNTFGSRIHRMLKLGLSIDEDETAEADTDMPPLEDDAGESKMEEVD</sequence>
<keyword id="KW-0067">ATP-binding</keyword>
<keyword id="KW-0143">Chaperone</keyword>
<keyword id="KW-0963">Cytoplasm</keyword>
<keyword id="KW-0547">Nucleotide-binding</keyword>
<keyword id="KW-1185">Reference proteome</keyword>
<keyword id="KW-0346">Stress response</keyword>
<evidence type="ECO:0000250" key="1"/>
<evidence type="ECO:0000256" key="2">
    <source>
        <dbReference type="SAM" id="MobiDB-lite"/>
    </source>
</evidence>
<evidence type="ECO:0000305" key="3"/>
<gene>
    <name type="primary">HSP81-1</name>
    <name type="synonym">HSP82</name>
    <name type="ORF">OsI_028744</name>
</gene>
<accession>A2YWQ1</accession>
<accession>P33126</accession>
<accession>Q6ZK13</accession>